<dbReference type="EMBL" id="CP000774">
    <property type="protein sequence ID" value="ABS61679.1"/>
    <property type="molecule type" value="Genomic_DNA"/>
</dbReference>
<dbReference type="RefSeq" id="WP_011994970.1">
    <property type="nucleotide sequence ID" value="NC_009719.1"/>
</dbReference>
<dbReference type="STRING" id="402881.Plav_0056"/>
<dbReference type="KEGG" id="pla:Plav_0056"/>
<dbReference type="eggNOG" id="COG5487">
    <property type="taxonomic scope" value="Bacteria"/>
</dbReference>
<dbReference type="HOGENOM" id="CLU_187346_1_0_5"/>
<dbReference type="Proteomes" id="UP000006377">
    <property type="component" value="Chromosome"/>
</dbReference>
<dbReference type="GO" id="GO:0005886">
    <property type="term" value="C:plasma membrane"/>
    <property type="evidence" value="ECO:0007669"/>
    <property type="project" value="UniProtKB-SubCell"/>
</dbReference>
<dbReference type="HAMAP" id="MF_01361">
    <property type="entry name" value="UPF0391"/>
    <property type="match status" value="1"/>
</dbReference>
<dbReference type="InterPro" id="IPR009760">
    <property type="entry name" value="DUF1328"/>
</dbReference>
<dbReference type="NCBIfam" id="NF010226">
    <property type="entry name" value="PRK13682.1-1"/>
    <property type="match status" value="1"/>
</dbReference>
<dbReference type="NCBIfam" id="NF010228">
    <property type="entry name" value="PRK13682.1-3"/>
    <property type="match status" value="1"/>
</dbReference>
<dbReference type="NCBIfam" id="NF010229">
    <property type="entry name" value="PRK13682.1-4"/>
    <property type="match status" value="1"/>
</dbReference>
<dbReference type="NCBIfam" id="NF010233">
    <property type="entry name" value="PRK13682.2-4"/>
    <property type="match status" value="1"/>
</dbReference>
<dbReference type="Pfam" id="PF07043">
    <property type="entry name" value="DUF1328"/>
    <property type="match status" value="1"/>
</dbReference>
<dbReference type="PIRSF" id="PIRSF036466">
    <property type="entry name" value="UCP036466"/>
    <property type="match status" value="1"/>
</dbReference>
<proteinExistence type="inferred from homology"/>
<name>Y056_PARL1</name>
<accession>A7HP46</accession>
<comment type="subcellular location">
    <subcellularLocation>
        <location evidence="1">Cell membrane</location>
        <topology evidence="1">Multi-pass membrane protein</topology>
    </subcellularLocation>
</comment>
<comment type="similarity">
    <text evidence="1">Belongs to the UPF0391 family.</text>
</comment>
<reference key="1">
    <citation type="journal article" date="2011" name="Stand. Genomic Sci.">
        <title>Complete genome sequence of Parvibaculum lavamentivorans type strain (DS-1(T)).</title>
        <authorList>
            <person name="Schleheck D."/>
            <person name="Weiss M."/>
            <person name="Pitluck S."/>
            <person name="Bruce D."/>
            <person name="Land M.L."/>
            <person name="Han S."/>
            <person name="Saunders E."/>
            <person name="Tapia R."/>
            <person name="Detter C."/>
            <person name="Brettin T."/>
            <person name="Han J."/>
            <person name="Woyke T."/>
            <person name="Goodwin L."/>
            <person name="Pennacchio L."/>
            <person name="Nolan M."/>
            <person name="Cook A.M."/>
            <person name="Kjelleberg S."/>
            <person name="Thomas T."/>
        </authorList>
    </citation>
    <scope>NUCLEOTIDE SEQUENCE [LARGE SCALE GENOMIC DNA]</scope>
    <source>
        <strain>DS-1 / DSM 13023 / NCIMB 13966</strain>
    </source>
</reference>
<gene>
    <name type="ordered locus">Plav_0056</name>
</gene>
<organism>
    <name type="scientific">Parvibaculum lavamentivorans (strain DS-1 / DSM 13023 / NCIMB 13966)</name>
    <dbReference type="NCBI Taxonomy" id="402881"/>
    <lineage>
        <taxon>Bacteria</taxon>
        <taxon>Pseudomonadati</taxon>
        <taxon>Pseudomonadota</taxon>
        <taxon>Alphaproteobacteria</taxon>
        <taxon>Hyphomicrobiales</taxon>
        <taxon>Parvibaculaceae</taxon>
        <taxon>Parvibaculum</taxon>
    </lineage>
</organism>
<evidence type="ECO:0000255" key="1">
    <source>
        <dbReference type="HAMAP-Rule" id="MF_01361"/>
    </source>
</evidence>
<keyword id="KW-1003">Cell membrane</keyword>
<keyword id="KW-0472">Membrane</keyword>
<keyword id="KW-1185">Reference proteome</keyword>
<keyword id="KW-0812">Transmembrane</keyword>
<keyword id="KW-1133">Transmembrane helix</keyword>
<sequence>MLYWAAVFFIIAVIAAVLGFGGLVSASASIAQILFFIFLVLFVVSLIFGVVRRPGPPR</sequence>
<protein>
    <recommendedName>
        <fullName evidence="1">UPF0391 membrane protein Plav_0056</fullName>
    </recommendedName>
</protein>
<feature type="chain" id="PRO_1000073380" description="UPF0391 membrane protein Plav_0056">
    <location>
        <begin position="1"/>
        <end position="58"/>
    </location>
</feature>
<feature type="transmembrane region" description="Helical" evidence="1">
    <location>
        <begin position="4"/>
        <end position="24"/>
    </location>
</feature>
<feature type="transmembrane region" description="Helical" evidence="1">
    <location>
        <begin position="30"/>
        <end position="50"/>
    </location>
</feature>